<accession>Q5FFA8</accession>
<sequence>MSVKIRLARFGAKKRPFYRVVVADSRVARDGRFIELLGFYNPMLPKEHPSFLKVKIDRLKYWLSVGAQPTERISWFIKKGLISTEAA</sequence>
<name>RS16_EHRRG</name>
<comment type="similarity">
    <text evidence="1">Belongs to the bacterial ribosomal protein bS16 family.</text>
</comment>
<gene>
    <name evidence="1" type="primary">rpsP</name>
    <name type="ordered locus">ERGA_CDS_01240</name>
</gene>
<feature type="chain" id="PRO_0000243805" description="Small ribosomal subunit protein bS16">
    <location>
        <begin position="1"/>
        <end position="87"/>
    </location>
</feature>
<evidence type="ECO:0000255" key="1">
    <source>
        <dbReference type="HAMAP-Rule" id="MF_00385"/>
    </source>
</evidence>
<evidence type="ECO:0000305" key="2"/>
<dbReference type="EMBL" id="CR925677">
    <property type="protein sequence ID" value="CAI27576.1"/>
    <property type="molecule type" value="Genomic_DNA"/>
</dbReference>
<dbReference type="RefSeq" id="WP_011255316.1">
    <property type="nucleotide sequence ID" value="NC_006831.1"/>
</dbReference>
<dbReference type="SMR" id="Q5FFA8"/>
<dbReference type="KEGG" id="erg:ERGA_CDS_01240"/>
<dbReference type="HOGENOM" id="CLU_100590_5_0_5"/>
<dbReference type="OrthoDB" id="9807878at2"/>
<dbReference type="Proteomes" id="UP000000533">
    <property type="component" value="Chromosome"/>
</dbReference>
<dbReference type="GO" id="GO:0005737">
    <property type="term" value="C:cytoplasm"/>
    <property type="evidence" value="ECO:0007669"/>
    <property type="project" value="UniProtKB-ARBA"/>
</dbReference>
<dbReference type="GO" id="GO:0015935">
    <property type="term" value="C:small ribosomal subunit"/>
    <property type="evidence" value="ECO:0007669"/>
    <property type="project" value="TreeGrafter"/>
</dbReference>
<dbReference type="GO" id="GO:0003735">
    <property type="term" value="F:structural constituent of ribosome"/>
    <property type="evidence" value="ECO:0007669"/>
    <property type="project" value="InterPro"/>
</dbReference>
<dbReference type="GO" id="GO:0006412">
    <property type="term" value="P:translation"/>
    <property type="evidence" value="ECO:0007669"/>
    <property type="project" value="UniProtKB-UniRule"/>
</dbReference>
<dbReference type="Gene3D" id="3.30.1320.10">
    <property type="match status" value="1"/>
</dbReference>
<dbReference type="HAMAP" id="MF_00385">
    <property type="entry name" value="Ribosomal_bS16"/>
    <property type="match status" value="1"/>
</dbReference>
<dbReference type="InterPro" id="IPR000307">
    <property type="entry name" value="Ribosomal_bS16"/>
</dbReference>
<dbReference type="InterPro" id="IPR020592">
    <property type="entry name" value="Ribosomal_bS16_CS"/>
</dbReference>
<dbReference type="InterPro" id="IPR023803">
    <property type="entry name" value="Ribosomal_bS16_dom_sf"/>
</dbReference>
<dbReference type="NCBIfam" id="TIGR00002">
    <property type="entry name" value="S16"/>
    <property type="match status" value="1"/>
</dbReference>
<dbReference type="PANTHER" id="PTHR12919">
    <property type="entry name" value="30S RIBOSOMAL PROTEIN S16"/>
    <property type="match status" value="1"/>
</dbReference>
<dbReference type="PANTHER" id="PTHR12919:SF20">
    <property type="entry name" value="SMALL RIBOSOMAL SUBUNIT PROTEIN BS16M"/>
    <property type="match status" value="1"/>
</dbReference>
<dbReference type="Pfam" id="PF00886">
    <property type="entry name" value="Ribosomal_S16"/>
    <property type="match status" value="1"/>
</dbReference>
<dbReference type="SUPFAM" id="SSF54565">
    <property type="entry name" value="Ribosomal protein S16"/>
    <property type="match status" value="1"/>
</dbReference>
<dbReference type="PROSITE" id="PS00732">
    <property type="entry name" value="RIBOSOMAL_S16"/>
    <property type="match status" value="1"/>
</dbReference>
<keyword id="KW-0687">Ribonucleoprotein</keyword>
<keyword id="KW-0689">Ribosomal protein</keyword>
<protein>
    <recommendedName>
        <fullName evidence="1">Small ribosomal subunit protein bS16</fullName>
    </recommendedName>
    <alternativeName>
        <fullName evidence="2">30S ribosomal protein S16</fullName>
    </alternativeName>
</protein>
<organism>
    <name type="scientific">Ehrlichia ruminantium (strain Gardel)</name>
    <dbReference type="NCBI Taxonomy" id="302409"/>
    <lineage>
        <taxon>Bacteria</taxon>
        <taxon>Pseudomonadati</taxon>
        <taxon>Pseudomonadota</taxon>
        <taxon>Alphaproteobacteria</taxon>
        <taxon>Rickettsiales</taxon>
        <taxon>Anaplasmataceae</taxon>
        <taxon>Ehrlichia</taxon>
    </lineage>
</organism>
<proteinExistence type="inferred from homology"/>
<reference key="1">
    <citation type="journal article" date="2006" name="J. Bacteriol.">
        <title>Comparative genomic analysis of three strains of Ehrlichia ruminantium reveals an active process of genome size plasticity.</title>
        <authorList>
            <person name="Frutos R."/>
            <person name="Viari A."/>
            <person name="Ferraz C."/>
            <person name="Morgat A."/>
            <person name="Eychenie S."/>
            <person name="Kandassamy Y."/>
            <person name="Chantal I."/>
            <person name="Bensaid A."/>
            <person name="Coissac E."/>
            <person name="Vachiery N."/>
            <person name="Demaille J."/>
            <person name="Martinez D."/>
        </authorList>
    </citation>
    <scope>NUCLEOTIDE SEQUENCE [LARGE SCALE GENOMIC DNA]</scope>
    <source>
        <strain>Gardel</strain>
    </source>
</reference>